<protein>
    <recommendedName>
        <fullName evidence="1">Imidazoleglycerol-phosphate dehydratase</fullName>
        <shortName evidence="1">IGPD</shortName>
        <ecNumber evidence="1">4.2.1.19</ecNumber>
    </recommendedName>
</protein>
<sequence length="202" mass="21807">MAASNPRQAEISRKTNETDISVTVDLDGEGRSDISTGVGFFDHMLDQLSRHSLIDMKVSALGDLHIDDHHTVEDCGIAIGQAIAKALGDRRGITRYASLDLAMDEALTRAAVDVSGRPFLVWQVTFPSPKIGSFDTELVREFFQALAQNAGITLHVTNLYGANAHHIAETCFKAVARVLRAALSPDPRQLNAIPSTKGTLNG</sequence>
<feature type="chain" id="PRO_1000010292" description="Imidazoleglycerol-phosphate dehydratase">
    <location>
        <begin position="1"/>
        <end position="202"/>
    </location>
</feature>
<keyword id="KW-0028">Amino-acid biosynthesis</keyword>
<keyword id="KW-0963">Cytoplasm</keyword>
<keyword id="KW-0368">Histidine biosynthesis</keyword>
<keyword id="KW-0456">Lyase</keyword>
<organism>
    <name type="scientific">Chelativorans sp. (strain BNC1)</name>
    <dbReference type="NCBI Taxonomy" id="266779"/>
    <lineage>
        <taxon>Bacteria</taxon>
        <taxon>Pseudomonadati</taxon>
        <taxon>Pseudomonadota</taxon>
        <taxon>Alphaproteobacteria</taxon>
        <taxon>Hyphomicrobiales</taxon>
        <taxon>Phyllobacteriaceae</taxon>
        <taxon>Chelativorans</taxon>
    </lineage>
</organism>
<name>HIS7_CHESB</name>
<evidence type="ECO:0000255" key="1">
    <source>
        <dbReference type="HAMAP-Rule" id="MF_00076"/>
    </source>
</evidence>
<comment type="catalytic activity">
    <reaction evidence="1">
        <text>D-erythro-1-(imidazol-4-yl)glycerol 3-phosphate = 3-(imidazol-4-yl)-2-oxopropyl phosphate + H2O</text>
        <dbReference type="Rhea" id="RHEA:11040"/>
        <dbReference type="ChEBI" id="CHEBI:15377"/>
        <dbReference type="ChEBI" id="CHEBI:57766"/>
        <dbReference type="ChEBI" id="CHEBI:58278"/>
        <dbReference type="EC" id="4.2.1.19"/>
    </reaction>
</comment>
<comment type="pathway">
    <text evidence="1">Amino-acid biosynthesis; L-histidine biosynthesis; L-histidine from 5-phospho-alpha-D-ribose 1-diphosphate: step 6/9.</text>
</comment>
<comment type="subcellular location">
    <subcellularLocation>
        <location evidence="1">Cytoplasm</location>
    </subcellularLocation>
</comment>
<comment type="similarity">
    <text evidence="1">Belongs to the imidazoleglycerol-phosphate dehydratase family.</text>
</comment>
<gene>
    <name evidence="1" type="primary">hisB</name>
    <name type="ordered locus">Meso_3493</name>
</gene>
<reference key="1">
    <citation type="submission" date="2006-06" db="EMBL/GenBank/DDBJ databases">
        <title>Complete sequence of chromosome of Mesorhizobium sp. BNC1.</title>
        <authorList>
            <consortium name="US DOE Joint Genome Institute"/>
            <person name="Copeland A."/>
            <person name="Lucas S."/>
            <person name="Lapidus A."/>
            <person name="Barry K."/>
            <person name="Detter J.C."/>
            <person name="Glavina del Rio T."/>
            <person name="Hammon N."/>
            <person name="Israni S."/>
            <person name="Dalin E."/>
            <person name="Tice H."/>
            <person name="Pitluck S."/>
            <person name="Chertkov O."/>
            <person name="Brettin T."/>
            <person name="Bruce D."/>
            <person name="Han C."/>
            <person name="Tapia R."/>
            <person name="Gilna P."/>
            <person name="Schmutz J."/>
            <person name="Larimer F."/>
            <person name="Land M."/>
            <person name="Hauser L."/>
            <person name="Kyrpides N."/>
            <person name="Mikhailova N."/>
            <person name="Richardson P."/>
        </authorList>
    </citation>
    <scope>NUCLEOTIDE SEQUENCE [LARGE SCALE GENOMIC DNA]</scope>
    <source>
        <strain>BNC1</strain>
    </source>
</reference>
<dbReference type="EC" id="4.2.1.19" evidence="1"/>
<dbReference type="EMBL" id="CP000390">
    <property type="protein sequence ID" value="ABG64864.1"/>
    <property type="molecule type" value="Genomic_DNA"/>
</dbReference>
<dbReference type="SMR" id="Q11CL1"/>
<dbReference type="STRING" id="266779.Meso_3493"/>
<dbReference type="KEGG" id="mes:Meso_3493"/>
<dbReference type="eggNOG" id="COG0131">
    <property type="taxonomic scope" value="Bacteria"/>
</dbReference>
<dbReference type="HOGENOM" id="CLU_044308_3_0_5"/>
<dbReference type="OrthoDB" id="9813612at2"/>
<dbReference type="UniPathway" id="UPA00031">
    <property type="reaction ID" value="UER00011"/>
</dbReference>
<dbReference type="GO" id="GO:0005737">
    <property type="term" value="C:cytoplasm"/>
    <property type="evidence" value="ECO:0007669"/>
    <property type="project" value="UniProtKB-SubCell"/>
</dbReference>
<dbReference type="GO" id="GO:0004424">
    <property type="term" value="F:imidazoleglycerol-phosphate dehydratase activity"/>
    <property type="evidence" value="ECO:0007669"/>
    <property type="project" value="UniProtKB-UniRule"/>
</dbReference>
<dbReference type="GO" id="GO:0000105">
    <property type="term" value="P:L-histidine biosynthetic process"/>
    <property type="evidence" value="ECO:0007669"/>
    <property type="project" value="UniProtKB-UniRule"/>
</dbReference>
<dbReference type="CDD" id="cd07914">
    <property type="entry name" value="IGPD"/>
    <property type="match status" value="1"/>
</dbReference>
<dbReference type="FunFam" id="3.30.230.40:FF:000001">
    <property type="entry name" value="Imidazoleglycerol-phosphate dehydratase HisB"/>
    <property type="match status" value="1"/>
</dbReference>
<dbReference type="FunFam" id="3.30.230.40:FF:000003">
    <property type="entry name" value="Imidazoleglycerol-phosphate dehydratase HisB"/>
    <property type="match status" value="1"/>
</dbReference>
<dbReference type="Gene3D" id="3.30.230.40">
    <property type="entry name" value="Imidazole glycerol phosphate dehydratase, domain 1"/>
    <property type="match status" value="2"/>
</dbReference>
<dbReference type="HAMAP" id="MF_00076">
    <property type="entry name" value="HisB"/>
    <property type="match status" value="1"/>
</dbReference>
<dbReference type="InterPro" id="IPR038494">
    <property type="entry name" value="IGPD_sf"/>
</dbReference>
<dbReference type="InterPro" id="IPR000807">
    <property type="entry name" value="ImidazoleglycerolP_deHydtase"/>
</dbReference>
<dbReference type="InterPro" id="IPR020565">
    <property type="entry name" value="ImidazoleglycerP_deHydtase_CS"/>
</dbReference>
<dbReference type="InterPro" id="IPR020568">
    <property type="entry name" value="Ribosomal_Su5_D2-typ_SF"/>
</dbReference>
<dbReference type="NCBIfam" id="NF002109">
    <property type="entry name" value="PRK00951.1-5"/>
    <property type="match status" value="1"/>
</dbReference>
<dbReference type="NCBIfam" id="NF002111">
    <property type="entry name" value="PRK00951.2-1"/>
    <property type="match status" value="1"/>
</dbReference>
<dbReference type="NCBIfam" id="NF002114">
    <property type="entry name" value="PRK00951.2-4"/>
    <property type="match status" value="1"/>
</dbReference>
<dbReference type="PANTHER" id="PTHR23133:SF2">
    <property type="entry name" value="IMIDAZOLEGLYCEROL-PHOSPHATE DEHYDRATASE"/>
    <property type="match status" value="1"/>
</dbReference>
<dbReference type="PANTHER" id="PTHR23133">
    <property type="entry name" value="IMIDAZOLEGLYCEROL-PHOSPHATE DEHYDRATASE HIS7"/>
    <property type="match status" value="1"/>
</dbReference>
<dbReference type="Pfam" id="PF00475">
    <property type="entry name" value="IGPD"/>
    <property type="match status" value="1"/>
</dbReference>
<dbReference type="SUPFAM" id="SSF54211">
    <property type="entry name" value="Ribosomal protein S5 domain 2-like"/>
    <property type="match status" value="2"/>
</dbReference>
<dbReference type="PROSITE" id="PS00954">
    <property type="entry name" value="IGP_DEHYDRATASE_1"/>
    <property type="match status" value="1"/>
</dbReference>
<dbReference type="PROSITE" id="PS00955">
    <property type="entry name" value="IGP_DEHYDRATASE_2"/>
    <property type="match status" value="1"/>
</dbReference>
<accession>Q11CL1</accession>
<proteinExistence type="inferred from homology"/>